<gene>
    <name evidence="1" type="primary">pafA</name>
    <name type="ordered locus">MLBr01328</name>
</gene>
<sequence length="452" mass="51458">MQRRIMGIETEFGVTCTFHGHRRLSPDEVARYLFRRVVSWGRSSNVFLRNGARLYLDVGSHPEYATAECDNLVQLVTHDRAGEWVLEDLLVDAEQRLADEGIGGDIYLFKNNTDSAGNSYGCHENYLIVRAGEFSRISDVLLPFLVTRQLICGAGKVLQTPKAATFCLSQRAEHIWEGVSSATTRSRPIINTRDEPHADAEKYRRLHVIVGDSNMCETTTMLKVGTAALMLEMVETGVPFRDFSLDNPIRAIREVSHDITGRRPVRLAGGRQASALDIQREYYTRAFEHLQTREPNVQFEQVVDLWGRQLDAIESQDFAKVDTEIDWVIKRKLFQRYQDRDNMELTDPKIAQLDLAYHDIKRGRGVFDLLQRKGLAARVTTDEDIADAVNHPPQTTRARLRGEFISAAQAAGRDFTVDWVHLKLNDQAQRTVLCKDPFRAVDERVKRLIASM</sequence>
<keyword id="KW-0067">ATP-binding</keyword>
<keyword id="KW-0436">Ligase</keyword>
<keyword id="KW-0460">Magnesium</keyword>
<keyword id="KW-0479">Metal-binding</keyword>
<keyword id="KW-0547">Nucleotide-binding</keyword>
<keyword id="KW-0833">Ubl conjugation pathway</keyword>
<feature type="chain" id="PRO_0000395928" description="Pup--protein ligase">
    <location>
        <begin position="1"/>
        <end position="452"/>
    </location>
</feature>
<feature type="active site" description="Proton acceptor" evidence="1">
    <location>
        <position position="57"/>
    </location>
</feature>
<feature type="binding site" evidence="1">
    <location>
        <position position="9"/>
    </location>
    <ligand>
        <name>Mg(2+)</name>
        <dbReference type="ChEBI" id="CHEBI:18420"/>
    </ligand>
</feature>
<feature type="binding site" evidence="1">
    <location>
        <position position="53"/>
    </location>
    <ligand>
        <name>ATP</name>
        <dbReference type="ChEBI" id="CHEBI:30616"/>
    </ligand>
</feature>
<feature type="binding site" evidence="1">
    <location>
        <position position="55"/>
    </location>
    <ligand>
        <name>Mg(2+)</name>
        <dbReference type="ChEBI" id="CHEBI:18420"/>
    </ligand>
</feature>
<feature type="binding site" evidence="1">
    <location>
        <position position="63"/>
    </location>
    <ligand>
        <name>Mg(2+)</name>
        <dbReference type="ChEBI" id="CHEBI:18420"/>
    </ligand>
</feature>
<feature type="binding site" evidence="1">
    <location>
        <position position="66"/>
    </location>
    <ligand>
        <name>ATP</name>
        <dbReference type="ChEBI" id="CHEBI:30616"/>
    </ligand>
</feature>
<feature type="binding site" evidence="1">
    <location>
        <position position="419"/>
    </location>
    <ligand>
        <name>ATP</name>
        <dbReference type="ChEBI" id="CHEBI:30616"/>
    </ligand>
</feature>
<protein>
    <recommendedName>
        <fullName evidence="1">Pup--protein ligase</fullName>
        <ecNumber evidence="1">6.3.1.19</ecNumber>
    </recommendedName>
    <alternativeName>
        <fullName evidence="1">Proteasome accessory factor A</fullName>
    </alternativeName>
    <alternativeName>
        <fullName evidence="1">Pup-conjugating enzyme</fullName>
    </alternativeName>
</protein>
<dbReference type="EC" id="6.3.1.19" evidence="1"/>
<dbReference type="EMBL" id="FM211192">
    <property type="protein sequence ID" value="CAR71423.1"/>
    <property type="molecule type" value="Genomic_DNA"/>
</dbReference>
<dbReference type="SMR" id="B8ZRF5"/>
<dbReference type="KEGG" id="mlb:MLBr01328"/>
<dbReference type="HOGENOM" id="CLU_040524_0_1_11"/>
<dbReference type="UniPathway" id="UPA00997"/>
<dbReference type="UniPathway" id="UPA00998"/>
<dbReference type="Proteomes" id="UP000006900">
    <property type="component" value="Chromosome"/>
</dbReference>
<dbReference type="GO" id="GO:0005524">
    <property type="term" value="F:ATP binding"/>
    <property type="evidence" value="ECO:0007669"/>
    <property type="project" value="UniProtKB-UniRule"/>
</dbReference>
<dbReference type="GO" id="GO:0016879">
    <property type="term" value="F:ligase activity, forming carbon-nitrogen bonds"/>
    <property type="evidence" value="ECO:0007669"/>
    <property type="project" value="InterPro"/>
</dbReference>
<dbReference type="GO" id="GO:0000287">
    <property type="term" value="F:magnesium ion binding"/>
    <property type="evidence" value="ECO:0007669"/>
    <property type="project" value="UniProtKB-UniRule"/>
</dbReference>
<dbReference type="GO" id="GO:0019787">
    <property type="term" value="F:ubiquitin-like protein transferase activity"/>
    <property type="evidence" value="ECO:0007669"/>
    <property type="project" value="UniProtKB-UniRule"/>
</dbReference>
<dbReference type="GO" id="GO:0019941">
    <property type="term" value="P:modification-dependent protein catabolic process"/>
    <property type="evidence" value="ECO:0007669"/>
    <property type="project" value="UniProtKB-UniRule"/>
</dbReference>
<dbReference type="GO" id="GO:0010498">
    <property type="term" value="P:proteasomal protein catabolic process"/>
    <property type="evidence" value="ECO:0007669"/>
    <property type="project" value="UniProtKB-UniRule"/>
</dbReference>
<dbReference type="GO" id="GO:0070490">
    <property type="term" value="P:protein pupylation"/>
    <property type="evidence" value="ECO:0007669"/>
    <property type="project" value="UniProtKB-UniRule"/>
</dbReference>
<dbReference type="HAMAP" id="MF_02111">
    <property type="entry name" value="Pup_ligase"/>
    <property type="match status" value="1"/>
</dbReference>
<dbReference type="InterPro" id="IPR022279">
    <property type="entry name" value="Pup_ligase"/>
</dbReference>
<dbReference type="InterPro" id="IPR004347">
    <property type="entry name" value="Pup_ligase/deamidase"/>
</dbReference>
<dbReference type="NCBIfam" id="TIGR03686">
    <property type="entry name" value="pupylate_PafA"/>
    <property type="match status" value="1"/>
</dbReference>
<dbReference type="PANTHER" id="PTHR42307">
    <property type="entry name" value="PUP DEAMIDASE/DEPUPYLASE"/>
    <property type="match status" value="1"/>
</dbReference>
<dbReference type="PANTHER" id="PTHR42307:SF3">
    <property type="entry name" value="PUP--PROTEIN LIGASE"/>
    <property type="match status" value="1"/>
</dbReference>
<dbReference type="Pfam" id="PF03136">
    <property type="entry name" value="Pup_ligase"/>
    <property type="match status" value="1"/>
</dbReference>
<dbReference type="PIRSF" id="PIRSF018077">
    <property type="entry name" value="UCP018077"/>
    <property type="match status" value="1"/>
</dbReference>
<comment type="function">
    <text evidence="1">Catalyzes the covalent attachment of the prokaryotic ubiquitin-like protein modifier Pup to the proteasomal substrate proteins, thereby targeting them for proteasomal degradation. This tagging system is termed pupylation. The ligation reaction involves the side-chain carboxylate of the C-terminal glutamate of Pup and the side-chain amino group of a substrate lysine.</text>
</comment>
<comment type="catalytic activity">
    <reaction evidence="1">
        <text>ATP + [prokaryotic ubiquitin-like protein]-L-glutamate + [protein]-L-lysine = ADP + phosphate + N(6)-([prokaryotic ubiquitin-like protein]-gamma-L-glutamyl)-[protein]-L-lysine.</text>
        <dbReference type="EC" id="6.3.1.19"/>
    </reaction>
</comment>
<comment type="pathway">
    <text evidence="1">Protein degradation; proteasomal Pup-dependent pathway.</text>
</comment>
<comment type="pathway">
    <text evidence="1">Protein modification; protein pupylation.</text>
</comment>
<comment type="miscellaneous">
    <text evidence="1">The reaction mechanism probably proceeds via the activation of Pup by phosphorylation of its C-terminal glutamate, which is then subject to nucleophilic attack by the substrate lysine, resulting in an isopeptide bond and the release of phosphate as a good leaving group.</text>
</comment>
<comment type="similarity">
    <text evidence="1">Belongs to the Pup ligase/Pup deamidase family. Pup-conjugating enzyme subfamily.</text>
</comment>
<organism>
    <name type="scientific">Mycobacterium leprae (strain Br4923)</name>
    <dbReference type="NCBI Taxonomy" id="561304"/>
    <lineage>
        <taxon>Bacteria</taxon>
        <taxon>Bacillati</taxon>
        <taxon>Actinomycetota</taxon>
        <taxon>Actinomycetes</taxon>
        <taxon>Mycobacteriales</taxon>
        <taxon>Mycobacteriaceae</taxon>
        <taxon>Mycobacterium</taxon>
    </lineage>
</organism>
<proteinExistence type="inferred from homology"/>
<reference key="1">
    <citation type="journal article" date="2009" name="Nat. Genet.">
        <title>Comparative genomic and phylogeographic analysis of Mycobacterium leprae.</title>
        <authorList>
            <person name="Monot M."/>
            <person name="Honore N."/>
            <person name="Garnier T."/>
            <person name="Zidane N."/>
            <person name="Sherafi D."/>
            <person name="Paniz-Mondolfi A."/>
            <person name="Matsuoka M."/>
            <person name="Taylor G.M."/>
            <person name="Donoghue H.D."/>
            <person name="Bouwman A."/>
            <person name="Mays S."/>
            <person name="Watson C."/>
            <person name="Lockwood D."/>
            <person name="Khamispour A."/>
            <person name="Dowlati Y."/>
            <person name="Jianping S."/>
            <person name="Rea T.H."/>
            <person name="Vera-Cabrera L."/>
            <person name="Stefani M.M."/>
            <person name="Banu S."/>
            <person name="Macdonald M."/>
            <person name="Sapkota B.R."/>
            <person name="Spencer J.S."/>
            <person name="Thomas J."/>
            <person name="Harshman K."/>
            <person name="Singh P."/>
            <person name="Busso P."/>
            <person name="Gattiker A."/>
            <person name="Rougemont J."/>
            <person name="Brennan P.J."/>
            <person name="Cole S.T."/>
        </authorList>
    </citation>
    <scope>NUCLEOTIDE SEQUENCE [LARGE SCALE GENOMIC DNA]</scope>
    <source>
        <strain>Br4923</strain>
    </source>
</reference>
<accession>B8ZRF5</accession>
<name>PAFA_MYCLB</name>
<evidence type="ECO:0000255" key="1">
    <source>
        <dbReference type="HAMAP-Rule" id="MF_02111"/>
    </source>
</evidence>